<reference key="1">
    <citation type="journal article" date="2009" name="Mol. Biol. Evol.">
        <title>Molecular evolution, functional variation, and proposed nomenclature of the gene family that includes sphingomyelinase D in sicariid spider venoms.</title>
        <authorList>
            <person name="Binford G.J."/>
            <person name="Bodner M.R."/>
            <person name="Cordes M.H."/>
            <person name="Baldwin K.L."/>
            <person name="Rynerson M.R."/>
            <person name="Burns S.N."/>
            <person name="Zobel-Thropp P.A."/>
        </authorList>
    </citation>
    <scope>NUCLEOTIDE SEQUENCE [MRNA]</scope>
    <scope>NOMENCLATURE</scope>
    <source>
        <tissue>Venom gland</tissue>
    </source>
</reference>
<dbReference type="EC" id="4.6.1.-" evidence="4"/>
<dbReference type="EMBL" id="FJ171458">
    <property type="protein sequence ID" value="ACN48954.1"/>
    <property type="molecule type" value="mRNA"/>
</dbReference>
<dbReference type="SMR" id="C0JB23"/>
<dbReference type="GO" id="GO:0005576">
    <property type="term" value="C:extracellular region"/>
    <property type="evidence" value="ECO:0007669"/>
    <property type="project" value="UniProtKB-SubCell"/>
</dbReference>
<dbReference type="GO" id="GO:0016829">
    <property type="term" value="F:lyase activity"/>
    <property type="evidence" value="ECO:0007669"/>
    <property type="project" value="UniProtKB-KW"/>
</dbReference>
<dbReference type="GO" id="GO:0046872">
    <property type="term" value="F:metal ion binding"/>
    <property type="evidence" value="ECO:0007669"/>
    <property type="project" value="UniProtKB-KW"/>
</dbReference>
<dbReference type="GO" id="GO:0008081">
    <property type="term" value="F:phosphoric diester hydrolase activity"/>
    <property type="evidence" value="ECO:0007669"/>
    <property type="project" value="InterPro"/>
</dbReference>
<dbReference type="GO" id="GO:0090729">
    <property type="term" value="F:toxin activity"/>
    <property type="evidence" value="ECO:0007669"/>
    <property type="project" value="UniProtKB-KW"/>
</dbReference>
<dbReference type="GO" id="GO:0031640">
    <property type="term" value="P:killing of cells of another organism"/>
    <property type="evidence" value="ECO:0007669"/>
    <property type="project" value="UniProtKB-KW"/>
</dbReference>
<dbReference type="GO" id="GO:0016042">
    <property type="term" value="P:lipid catabolic process"/>
    <property type="evidence" value="ECO:0007669"/>
    <property type="project" value="UniProtKB-KW"/>
</dbReference>
<dbReference type="CDD" id="cd08576">
    <property type="entry name" value="GDPD_like_SMaseD_PLD"/>
    <property type="match status" value="1"/>
</dbReference>
<dbReference type="Gene3D" id="3.20.20.190">
    <property type="entry name" value="Phosphatidylinositol (PI) phosphodiesterase"/>
    <property type="match status" value="1"/>
</dbReference>
<dbReference type="InterPro" id="IPR017946">
    <property type="entry name" value="PLC-like_Pdiesterase_TIM-brl"/>
</dbReference>
<dbReference type="SUPFAM" id="SSF51695">
    <property type="entry name" value="PLC-like phosphodiesterases"/>
    <property type="match status" value="1"/>
</dbReference>
<sequence>WIMGHMVNKIEQINEFLDLGANSIEVDITFDNLGYAEYTYHGFPCDCKRWCTNQENVKEYLNALSDITTPGNPKFRKELTLVVFDLKTGGIDANRMYEGGKDFAGKILFDYWKGSENAGRAYIIISVPSIDHYKFMKGFRERFDGSAFKDLLLEKDGWDFSGNDDLDATRTAYQNAGIEALNHIWQSDGITNCIPRGLGRVNKAVSNRDSPDAFINKVYVWTVEKYSSVKDALNADVDGIMTNHPNVINGVLKEDEFKDRFKLATYGDNPWTKFKR</sequence>
<organism>
    <name type="scientific">Loxosceles laeta</name>
    <name type="common">South American recluse spider</name>
    <name type="synonym">Scytodes laeta</name>
    <dbReference type="NCBI Taxonomy" id="58217"/>
    <lineage>
        <taxon>Eukaryota</taxon>
        <taxon>Metazoa</taxon>
        <taxon>Ecdysozoa</taxon>
        <taxon>Arthropoda</taxon>
        <taxon>Chelicerata</taxon>
        <taxon>Arachnida</taxon>
        <taxon>Araneae</taxon>
        <taxon>Araneomorphae</taxon>
        <taxon>Haplogynae</taxon>
        <taxon>Scytodoidea</taxon>
        <taxon>Sicariidae</taxon>
        <taxon>Loxosceles</taxon>
    </lineage>
</organism>
<protein>
    <recommendedName>
        <fullName evidence="6">Dermonecrotic toxin LlSicTox-alphaIV1i</fullName>
        <ecNumber evidence="4">4.6.1.-</ecNumber>
    </recommendedName>
    <alternativeName>
        <fullName>Phospholipase D</fullName>
        <shortName>PLD</shortName>
    </alternativeName>
    <alternativeName>
        <fullName>Sphingomyelin phosphodiesterase D</fullName>
        <shortName>SMD</shortName>
        <shortName>SMase D</shortName>
        <shortName>Sphingomyelinase D</shortName>
    </alternativeName>
</protein>
<feature type="chain" id="PRO_0000392831" description="Dermonecrotic toxin LlSicTox-alphaIV1i">
    <location>
        <begin position="1" status="less than"/>
        <end position="276"/>
    </location>
</feature>
<feature type="active site" evidence="5">
    <location>
        <position position="5"/>
    </location>
</feature>
<feature type="active site" description="Nucleophile" evidence="5">
    <location>
        <position position="41"/>
    </location>
</feature>
<feature type="binding site" evidence="5">
    <location>
        <position position="25"/>
    </location>
    <ligand>
        <name>Mg(2+)</name>
        <dbReference type="ChEBI" id="CHEBI:18420"/>
    </ligand>
</feature>
<feature type="binding site" evidence="5">
    <location>
        <position position="27"/>
    </location>
    <ligand>
        <name>Mg(2+)</name>
        <dbReference type="ChEBI" id="CHEBI:18420"/>
    </ligand>
</feature>
<feature type="binding site" evidence="5">
    <location>
        <position position="85"/>
    </location>
    <ligand>
        <name>Mg(2+)</name>
        <dbReference type="ChEBI" id="CHEBI:18420"/>
    </ligand>
</feature>
<feature type="disulfide bond" evidence="3">
    <location>
        <begin position="45"/>
        <end position="51"/>
    </location>
</feature>
<feature type="disulfide bond" evidence="3">
    <location>
        <begin position="47"/>
        <end position="193"/>
    </location>
</feature>
<feature type="non-terminal residue">
    <location>
        <position position="1"/>
    </location>
</feature>
<evidence type="ECO:0000250" key="1">
    <source>
        <dbReference type="UniProtKB" id="A0A0D4WTV1"/>
    </source>
</evidence>
<evidence type="ECO:0000250" key="2">
    <source>
        <dbReference type="UniProtKB" id="A0A0D4WV12"/>
    </source>
</evidence>
<evidence type="ECO:0000250" key="3">
    <source>
        <dbReference type="UniProtKB" id="P0CE80"/>
    </source>
</evidence>
<evidence type="ECO:0000250" key="4">
    <source>
        <dbReference type="UniProtKB" id="Q4ZFU2"/>
    </source>
</evidence>
<evidence type="ECO:0000250" key="5">
    <source>
        <dbReference type="UniProtKB" id="Q8I914"/>
    </source>
</evidence>
<evidence type="ECO:0000303" key="6">
    <source>
    </source>
</evidence>
<evidence type="ECO:0000305" key="7"/>
<evidence type="ECO:0000305" key="8">
    <source>
    </source>
</evidence>
<keyword id="KW-0204">Cytolysis</keyword>
<keyword id="KW-1061">Dermonecrotic toxin</keyword>
<keyword id="KW-1015">Disulfide bond</keyword>
<keyword id="KW-0354">Hemolysis</keyword>
<keyword id="KW-0442">Lipid degradation</keyword>
<keyword id="KW-0443">Lipid metabolism</keyword>
<keyword id="KW-0456">Lyase</keyword>
<keyword id="KW-0460">Magnesium</keyword>
<keyword id="KW-0479">Metal-binding</keyword>
<keyword id="KW-0964">Secreted</keyword>
<keyword id="KW-0800">Toxin</keyword>
<name>A411_LOXLA</name>
<proteinExistence type="evidence at transcript level"/>
<comment type="function">
    <text evidence="1 3">Dermonecrotic toxins cleave the phosphodiester linkage between the phosphate and headgroup of certain phospholipids (sphingolipid and lysolipid substrates), forming an alcohol (often choline) and a cyclic phosphate (By similarity). This toxin acts on sphingomyelin (SM) (By similarity). It may also act on ceramide phosphoethanolamine (CPE), lysophosphatidylcholine (LPC) and lysophosphatidylethanolamine (LPE), but not on lysophosphatidylserine (LPS), and lysophosphatidylglycerol (LPG) (By similarity). It acts by transphosphatidylation, releasing exclusively cyclic phosphate products as second products (By similarity). Induces dermonecrosis, hemolysis, increased vascular permeability, edema, inflammatory response, and platelet aggregation (By similarity).</text>
</comment>
<comment type="catalytic activity">
    <reaction evidence="1">
        <text>an N-(acyl)-sphingosylphosphocholine = an N-(acyl)-sphingosyl-1,3-cyclic phosphate + choline</text>
        <dbReference type="Rhea" id="RHEA:60652"/>
        <dbReference type="ChEBI" id="CHEBI:15354"/>
        <dbReference type="ChEBI" id="CHEBI:64583"/>
        <dbReference type="ChEBI" id="CHEBI:143892"/>
    </reaction>
</comment>
<comment type="catalytic activity">
    <reaction evidence="1">
        <text>an N-(acyl)-sphingosylphosphoethanolamine = an N-(acyl)-sphingosyl-1,3-cyclic phosphate + ethanolamine</text>
        <dbReference type="Rhea" id="RHEA:60648"/>
        <dbReference type="ChEBI" id="CHEBI:57603"/>
        <dbReference type="ChEBI" id="CHEBI:143891"/>
        <dbReference type="ChEBI" id="CHEBI:143892"/>
    </reaction>
</comment>
<comment type="catalytic activity">
    <reaction evidence="1">
        <text>a 1-acyl-sn-glycero-3-phosphocholine = a 1-acyl-sn-glycero-2,3-cyclic phosphate + choline</text>
        <dbReference type="Rhea" id="RHEA:60700"/>
        <dbReference type="ChEBI" id="CHEBI:15354"/>
        <dbReference type="ChEBI" id="CHEBI:58168"/>
        <dbReference type="ChEBI" id="CHEBI:143947"/>
    </reaction>
</comment>
<comment type="catalytic activity">
    <reaction evidence="1">
        <text>a 1-acyl-sn-glycero-3-phosphoethanolamine = a 1-acyl-sn-glycero-2,3-cyclic phosphate + ethanolamine</text>
        <dbReference type="Rhea" id="RHEA:60704"/>
        <dbReference type="ChEBI" id="CHEBI:57603"/>
        <dbReference type="ChEBI" id="CHEBI:64381"/>
        <dbReference type="ChEBI" id="CHEBI:143947"/>
    </reaction>
</comment>
<comment type="cofactor">
    <cofactor evidence="5">
        <name>Mg(2+)</name>
        <dbReference type="ChEBI" id="CHEBI:18420"/>
    </cofactor>
    <text evidence="5">Binds 1 Mg(2+) ion per subunit.</text>
</comment>
<comment type="subcellular location">
    <subcellularLocation>
        <location evidence="8">Secreted</location>
    </subcellularLocation>
</comment>
<comment type="tissue specificity">
    <text evidence="8">Expressed by the venom gland.</text>
</comment>
<comment type="similarity">
    <text evidence="7">Belongs to the arthropod phospholipase D family. Class II subfamily.</text>
</comment>
<comment type="caution">
    <text evidence="1 2 4">The most common activity assay for dermonecrotic toxins detects enzymatic activity by monitoring choline release from substrate. Liberation of choline from sphingomyelin (SM) or lysophosphatidylcholine (LPC) is commonly assumed to result from substrate hydrolysis, giving either ceramide-1-phosphate (C1P) or lysophosphatidic acid (LPA), respectively, as a second product. However, two studies from Lajoie and colleagues (2013 and 2015) report the observation of exclusive formation of cyclic phosphate products as second products, resulting from intramolecular transphosphatidylation. Cyclic phosphates have vastly different biological properties from their monoester counterparts, and they may be relevant to the pathology of brown spider envenomation.</text>
</comment>
<accession>C0JB23</accession>